<proteinExistence type="inferred from homology"/>
<feature type="chain" id="PRO_0000286213" description="Spermidine/putrescine import ATP-binding protein PotA">
    <location>
        <begin position="1"/>
        <end position="368"/>
    </location>
</feature>
<feature type="domain" description="ABC transporter" evidence="1">
    <location>
        <begin position="8"/>
        <end position="238"/>
    </location>
</feature>
<feature type="binding site" evidence="1">
    <location>
        <begin position="40"/>
        <end position="47"/>
    </location>
    <ligand>
        <name>ATP</name>
        <dbReference type="ChEBI" id="CHEBI:30616"/>
    </ligand>
</feature>
<reference key="1">
    <citation type="journal article" date="2004" name="Nat. Biotechnol.">
        <title>The genome sequence of the anaerobic, sulfate-reducing bacterium Desulfovibrio vulgaris Hildenborough.</title>
        <authorList>
            <person name="Heidelberg J.F."/>
            <person name="Seshadri R."/>
            <person name="Haveman S.A."/>
            <person name="Hemme C.L."/>
            <person name="Paulsen I.T."/>
            <person name="Kolonay J.F."/>
            <person name="Eisen J.A."/>
            <person name="Ward N.L."/>
            <person name="Methe B.A."/>
            <person name="Brinkac L.M."/>
            <person name="Daugherty S.C."/>
            <person name="DeBoy R.T."/>
            <person name="Dodson R.J."/>
            <person name="Durkin A.S."/>
            <person name="Madupu R."/>
            <person name="Nelson W.C."/>
            <person name="Sullivan S.A."/>
            <person name="Fouts D.E."/>
            <person name="Haft D.H."/>
            <person name="Selengut J."/>
            <person name="Peterson J.D."/>
            <person name="Davidsen T.M."/>
            <person name="Zafar N."/>
            <person name="Zhou L."/>
            <person name="Radune D."/>
            <person name="Dimitrov G."/>
            <person name="Hance M."/>
            <person name="Tran K."/>
            <person name="Khouri H.M."/>
            <person name="Gill J."/>
            <person name="Utterback T.R."/>
            <person name="Feldblyum T.V."/>
            <person name="Wall J.D."/>
            <person name="Voordouw G."/>
            <person name="Fraser C.M."/>
        </authorList>
    </citation>
    <scope>NUCLEOTIDE SEQUENCE [LARGE SCALE GENOMIC DNA]</scope>
    <source>
        <strain>ATCC 29579 / DSM 644 / CCUG 34227 / NCIMB 8303 / VKM B-1760 / Hildenborough</strain>
    </source>
</reference>
<gene>
    <name evidence="1" type="primary">potA</name>
    <name type="ordered locus">DVU_0098</name>
</gene>
<accession>Q72FW5</accession>
<name>POTA_NITV2</name>
<organism>
    <name type="scientific">Nitratidesulfovibrio vulgaris (strain ATCC 29579 / DSM 644 / CCUG 34227 / NCIMB 8303 / VKM B-1760 / Hildenborough)</name>
    <name type="common">Desulfovibrio vulgaris</name>
    <dbReference type="NCBI Taxonomy" id="882"/>
    <lineage>
        <taxon>Bacteria</taxon>
        <taxon>Pseudomonadati</taxon>
        <taxon>Thermodesulfobacteriota</taxon>
        <taxon>Desulfovibrionia</taxon>
        <taxon>Desulfovibrionales</taxon>
        <taxon>Desulfovibrionaceae</taxon>
        <taxon>Nitratidesulfovibrio</taxon>
    </lineage>
</organism>
<comment type="function">
    <text evidence="1">Part of the ABC transporter complex PotABCD involved in spermidine/putrescine import. Responsible for energy coupling to the transport system.</text>
</comment>
<comment type="catalytic activity">
    <reaction evidence="1">
        <text>ATP + H2O + polyamine-[polyamine-binding protein]Side 1 = ADP + phosphate + polyamineSide 2 + [polyamine-binding protein]Side 1.</text>
        <dbReference type="EC" id="7.6.2.11"/>
    </reaction>
</comment>
<comment type="subunit">
    <text evidence="1">The complex is composed of two ATP-binding proteins (PotA), two transmembrane proteins (PotB and PotC) and a solute-binding protein (PotD).</text>
</comment>
<comment type="subcellular location">
    <subcellularLocation>
        <location evidence="1">Cell inner membrane</location>
        <topology evidence="1">Peripheral membrane protein</topology>
    </subcellularLocation>
</comment>
<comment type="similarity">
    <text evidence="1">Belongs to the ABC transporter superfamily. Spermidine/putrescine importer (TC 3.A.1.11.1) family.</text>
</comment>
<dbReference type="EC" id="7.6.2.11" evidence="1"/>
<dbReference type="EMBL" id="AE017285">
    <property type="protein sequence ID" value="AAS94582.1"/>
    <property type="molecule type" value="Genomic_DNA"/>
</dbReference>
<dbReference type="RefSeq" id="WP_010937409.1">
    <property type="nucleotide sequence ID" value="NC_002937.3"/>
</dbReference>
<dbReference type="RefSeq" id="YP_009323.1">
    <property type="nucleotide sequence ID" value="NC_002937.3"/>
</dbReference>
<dbReference type="SMR" id="Q72FW5"/>
<dbReference type="STRING" id="882.DVU_0098"/>
<dbReference type="PaxDb" id="882-DVU_0098"/>
<dbReference type="EnsemblBacteria" id="AAS94582">
    <property type="protein sequence ID" value="AAS94582"/>
    <property type="gene ID" value="DVU_0098"/>
</dbReference>
<dbReference type="KEGG" id="dvu:DVU_0098"/>
<dbReference type="PATRIC" id="fig|882.5.peg.97"/>
<dbReference type="eggNOG" id="COG3842">
    <property type="taxonomic scope" value="Bacteria"/>
</dbReference>
<dbReference type="HOGENOM" id="CLU_000604_1_1_7"/>
<dbReference type="OrthoDB" id="9809450at2"/>
<dbReference type="PhylomeDB" id="Q72FW5"/>
<dbReference type="Proteomes" id="UP000002194">
    <property type="component" value="Chromosome"/>
</dbReference>
<dbReference type="GO" id="GO:0043190">
    <property type="term" value="C:ATP-binding cassette (ABC) transporter complex"/>
    <property type="evidence" value="ECO:0007669"/>
    <property type="project" value="InterPro"/>
</dbReference>
<dbReference type="GO" id="GO:0015594">
    <property type="term" value="F:ABC-type putrescine transporter activity"/>
    <property type="evidence" value="ECO:0007669"/>
    <property type="project" value="InterPro"/>
</dbReference>
<dbReference type="GO" id="GO:0005524">
    <property type="term" value="F:ATP binding"/>
    <property type="evidence" value="ECO:0007669"/>
    <property type="project" value="UniProtKB-KW"/>
</dbReference>
<dbReference type="GO" id="GO:0016887">
    <property type="term" value="F:ATP hydrolysis activity"/>
    <property type="evidence" value="ECO:0007669"/>
    <property type="project" value="InterPro"/>
</dbReference>
<dbReference type="CDD" id="cd03300">
    <property type="entry name" value="ABC_PotA_N"/>
    <property type="match status" value="1"/>
</dbReference>
<dbReference type="FunFam" id="3.40.50.300:FF:000133">
    <property type="entry name" value="Spermidine/putrescine import ATP-binding protein PotA"/>
    <property type="match status" value="1"/>
</dbReference>
<dbReference type="Gene3D" id="2.40.50.100">
    <property type="match status" value="1"/>
</dbReference>
<dbReference type="Gene3D" id="3.40.50.300">
    <property type="entry name" value="P-loop containing nucleotide triphosphate hydrolases"/>
    <property type="match status" value="1"/>
</dbReference>
<dbReference type="InterPro" id="IPR003593">
    <property type="entry name" value="AAA+_ATPase"/>
</dbReference>
<dbReference type="InterPro" id="IPR050093">
    <property type="entry name" value="ABC_SmlMolc_Importer"/>
</dbReference>
<dbReference type="InterPro" id="IPR003439">
    <property type="entry name" value="ABC_transporter-like_ATP-bd"/>
</dbReference>
<dbReference type="InterPro" id="IPR017871">
    <property type="entry name" value="ABC_transporter-like_CS"/>
</dbReference>
<dbReference type="InterPro" id="IPR008995">
    <property type="entry name" value="Mo/tungstate-bd_C_term_dom"/>
</dbReference>
<dbReference type="InterPro" id="IPR027417">
    <property type="entry name" value="P-loop_NTPase"/>
</dbReference>
<dbReference type="InterPro" id="IPR005893">
    <property type="entry name" value="PotA-like"/>
</dbReference>
<dbReference type="InterPro" id="IPR017879">
    <property type="entry name" value="PotA_ATP-bd"/>
</dbReference>
<dbReference type="InterPro" id="IPR013611">
    <property type="entry name" value="Transp-assoc_OB_typ2"/>
</dbReference>
<dbReference type="NCBIfam" id="TIGR01187">
    <property type="entry name" value="potA"/>
    <property type="match status" value="1"/>
</dbReference>
<dbReference type="NCBIfam" id="NF006987">
    <property type="entry name" value="PRK09452.1"/>
    <property type="match status" value="1"/>
</dbReference>
<dbReference type="PANTHER" id="PTHR42781">
    <property type="entry name" value="SPERMIDINE/PUTRESCINE IMPORT ATP-BINDING PROTEIN POTA"/>
    <property type="match status" value="1"/>
</dbReference>
<dbReference type="PANTHER" id="PTHR42781:SF4">
    <property type="entry name" value="SPERMIDINE_PUTRESCINE IMPORT ATP-BINDING PROTEIN POTA"/>
    <property type="match status" value="1"/>
</dbReference>
<dbReference type="Pfam" id="PF00005">
    <property type="entry name" value="ABC_tran"/>
    <property type="match status" value="1"/>
</dbReference>
<dbReference type="Pfam" id="PF08402">
    <property type="entry name" value="TOBE_2"/>
    <property type="match status" value="1"/>
</dbReference>
<dbReference type="SMART" id="SM00382">
    <property type="entry name" value="AAA"/>
    <property type="match status" value="1"/>
</dbReference>
<dbReference type="SUPFAM" id="SSF50331">
    <property type="entry name" value="MOP-like"/>
    <property type="match status" value="1"/>
</dbReference>
<dbReference type="SUPFAM" id="SSF52540">
    <property type="entry name" value="P-loop containing nucleoside triphosphate hydrolases"/>
    <property type="match status" value="1"/>
</dbReference>
<dbReference type="PROSITE" id="PS00211">
    <property type="entry name" value="ABC_TRANSPORTER_1"/>
    <property type="match status" value="1"/>
</dbReference>
<dbReference type="PROSITE" id="PS50893">
    <property type="entry name" value="ABC_TRANSPORTER_2"/>
    <property type="match status" value="1"/>
</dbReference>
<dbReference type="PROSITE" id="PS51305">
    <property type="entry name" value="POTA"/>
    <property type="match status" value="1"/>
</dbReference>
<evidence type="ECO:0000255" key="1">
    <source>
        <dbReference type="HAMAP-Rule" id="MF_01726"/>
    </source>
</evidence>
<keyword id="KW-0067">ATP-binding</keyword>
<keyword id="KW-0997">Cell inner membrane</keyword>
<keyword id="KW-1003">Cell membrane</keyword>
<keyword id="KW-0472">Membrane</keyword>
<keyword id="KW-0547">Nucleotide-binding</keyword>
<keyword id="KW-1185">Reference proteome</keyword>
<keyword id="KW-1278">Translocase</keyword>
<keyword id="KW-0813">Transport</keyword>
<protein>
    <recommendedName>
        <fullName evidence="1">Spermidine/putrescine import ATP-binding protein PotA</fullName>
        <ecNumber evidence="1">7.6.2.11</ecNumber>
    </recommendedName>
</protein>
<sequence length="368" mass="41288">MAEKDNIIELRGVTKNFEDTCALDNIDLEIRNGEFLTLLGPSGCGKTTILRLISGFEKPDAGVITLKGQRMDDAPPEARQVNTVFQNYALFPHMSVRENVGFGLRMQRRPKDEIARRVHDALRMVHLEAHADRRPRQLSGGQQQRVAIARAVVNNPLVLLLDEPFSALDYKLRKQMQLEIKHLQRQLGITFVFVTHDQEEAFAMSDRVVVMNDGKIEQIGSPQEIYEEPANLYVARFVGEINILNAVIAANHGDGLYDAVIEGVTFPIRSQRTFAPGDKVNVLLRPEDLRVYTLTEDRPAGPHLTGRIEESVYKGATVDLIVTLSDGRRLMAAEFFNEDDVDINYNPGETVTVSWVDGWEVVLPDGEA</sequence>